<organism>
    <name type="scientific">Brucella abortus biovar 1 (strain 9-941)</name>
    <dbReference type="NCBI Taxonomy" id="262698"/>
    <lineage>
        <taxon>Bacteria</taxon>
        <taxon>Pseudomonadati</taxon>
        <taxon>Pseudomonadota</taxon>
        <taxon>Alphaproteobacteria</taxon>
        <taxon>Hyphomicrobiales</taxon>
        <taxon>Brucellaceae</taxon>
        <taxon>Brucella/Ochrobactrum group</taxon>
        <taxon>Brucella</taxon>
    </lineage>
</organism>
<sequence>MATAEIEEIPALLKPGQTVAGLDLGTKTIGLAVSDLGLSFAHPRPVIKRVKFTIDAQVLLKALETDKVGVIMIGLPMNMDGTAGPRVQATRAFVRTMQPLTDLPFVFWDERLSTVAAERALIGMDVSRGKRADRIDSAAAAFILQGALDRLHMMRRNDYDAG</sequence>
<accession>Q577Z6</accession>
<protein>
    <recommendedName>
        <fullName evidence="1">Putative pre-16S rRNA nuclease</fullName>
        <ecNumber evidence="1">3.1.-.-</ecNumber>
    </recommendedName>
</protein>
<reference key="1">
    <citation type="journal article" date="2005" name="J. Bacteriol.">
        <title>Completion of the genome sequence of Brucella abortus and comparison to the highly similar genomes of Brucella melitensis and Brucella suis.</title>
        <authorList>
            <person name="Halling S.M."/>
            <person name="Peterson-Burch B.D."/>
            <person name="Bricker B.J."/>
            <person name="Zuerner R.L."/>
            <person name="Qing Z."/>
            <person name="Li L.-L."/>
            <person name="Kapur V."/>
            <person name="Alt D.P."/>
            <person name="Olsen S.C."/>
        </authorList>
    </citation>
    <scope>NUCLEOTIDE SEQUENCE [LARGE SCALE GENOMIC DNA]</scope>
    <source>
        <strain>9-941</strain>
    </source>
</reference>
<dbReference type="EC" id="3.1.-.-" evidence="1"/>
<dbReference type="EMBL" id="AE017224">
    <property type="protein sequence ID" value="AAX76038.1"/>
    <property type="molecule type" value="Genomic_DNA"/>
</dbReference>
<dbReference type="SMR" id="Q577Z6"/>
<dbReference type="EnsemblBacteria" id="AAX76038">
    <property type="protein sequence ID" value="AAX76038"/>
    <property type="gene ID" value="BruAb2_0627"/>
</dbReference>
<dbReference type="KEGG" id="bmb:BruAb2_0627"/>
<dbReference type="HOGENOM" id="CLU_098240_1_1_5"/>
<dbReference type="Proteomes" id="UP000000540">
    <property type="component" value="Chromosome II"/>
</dbReference>
<dbReference type="GO" id="GO:0005829">
    <property type="term" value="C:cytosol"/>
    <property type="evidence" value="ECO:0007669"/>
    <property type="project" value="TreeGrafter"/>
</dbReference>
<dbReference type="GO" id="GO:0004518">
    <property type="term" value="F:nuclease activity"/>
    <property type="evidence" value="ECO:0007669"/>
    <property type="project" value="UniProtKB-KW"/>
</dbReference>
<dbReference type="GO" id="GO:0000967">
    <property type="term" value="P:rRNA 5'-end processing"/>
    <property type="evidence" value="ECO:0007669"/>
    <property type="project" value="UniProtKB-UniRule"/>
</dbReference>
<dbReference type="CDD" id="cd16964">
    <property type="entry name" value="YqgF"/>
    <property type="match status" value="1"/>
</dbReference>
<dbReference type="Gene3D" id="3.30.420.140">
    <property type="entry name" value="YqgF/RNase H-like domain"/>
    <property type="match status" value="1"/>
</dbReference>
<dbReference type="HAMAP" id="MF_00651">
    <property type="entry name" value="Nuclease_YqgF"/>
    <property type="match status" value="1"/>
</dbReference>
<dbReference type="InterPro" id="IPR012337">
    <property type="entry name" value="RNaseH-like_sf"/>
</dbReference>
<dbReference type="InterPro" id="IPR005227">
    <property type="entry name" value="YqgF"/>
</dbReference>
<dbReference type="InterPro" id="IPR006641">
    <property type="entry name" value="YqgF/RNaseH-like_dom"/>
</dbReference>
<dbReference type="InterPro" id="IPR037027">
    <property type="entry name" value="YqgF/RNaseH-like_dom_sf"/>
</dbReference>
<dbReference type="NCBIfam" id="TIGR00250">
    <property type="entry name" value="RNAse_H_YqgF"/>
    <property type="match status" value="1"/>
</dbReference>
<dbReference type="PANTHER" id="PTHR33317">
    <property type="entry name" value="POLYNUCLEOTIDYL TRANSFERASE, RIBONUCLEASE H-LIKE SUPERFAMILY PROTEIN"/>
    <property type="match status" value="1"/>
</dbReference>
<dbReference type="PANTHER" id="PTHR33317:SF4">
    <property type="entry name" value="POLYNUCLEOTIDYL TRANSFERASE, RIBONUCLEASE H-LIKE SUPERFAMILY PROTEIN"/>
    <property type="match status" value="1"/>
</dbReference>
<dbReference type="Pfam" id="PF03652">
    <property type="entry name" value="RuvX"/>
    <property type="match status" value="1"/>
</dbReference>
<dbReference type="SMART" id="SM00732">
    <property type="entry name" value="YqgFc"/>
    <property type="match status" value="1"/>
</dbReference>
<dbReference type="SUPFAM" id="SSF53098">
    <property type="entry name" value="Ribonuclease H-like"/>
    <property type="match status" value="1"/>
</dbReference>
<evidence type="ECO:0000255" key="1">
    <source>
        <dbReference type="HAMAP-Rule" id="MF_00651"/>
    </source>
</evidence>
<proteinExistence type="inferred from homology"/>
<feature type="chain" id="PRO_0000257507" description="Putative pre-16S rRNA nuclease">
    <location>
        <begin position="1"/>
        <end position="162"/>
    </location>
</feature>
<gene>
    <name type="ordered locus">BruAb2_0627</name>
</gene>
<keyword id="KW-0963">Cytoplasm</keyword>
<keyword id="KW-0378">Hydrolase</keyword>
<keyword id="KW-0540">Nuclease</keyword>
<keyword id="KW-0690">Ribosome biogenesis</keyword>
<name>YQGF_BRUAB</name>
<comment type="function">
    <text evidence="1">Could be a nuclease involved in processing of the 5'-end of pre-16S rRNA.</text>
</comment>
<comment type="subcellular location">
    <subcellularLocation>
        <location evidence="1">Cytoplasm</location>
    </subcellularLocation>
</comment>
<comment type="similarity">
    <text evidence="1">Belongs to the YqgF nuclease family.</text>
</comment>